<organism>
    <name type="scientific">Xanthomonas campestris pv. campestris (strain ATCC 33913 / DSM 3586 / NCPPB 528 / LMG 568 / P 25)</name>
    <dbReference type="NCBI Taxonomy" id="190485"/>
    <lineage>
        <taxon>Bacteria</taxon>
        <taxon>Pseudomonadati</taxon>
        <taxon>Pseudomonadota</taxon>
        <taxon>Gammaproteobacteria</taxon>
        <taxon>Lysobacterales</taxon>
        <taxon>Lysobacteraceae</taxon>
        <taxon>Xanthomonas</taxon>
    </lineage>
</organism>
<accession>Q8P6F6</accession>
<reference key="1">
    <citation type="journal article" date="2002" name="Nature">
        <title>Comparison of the genomes of two Xanthomonas pathogens with differing host specificities.</title>
        <authorList>
            <person name="da Silva A.C.R."/>
            <person name="Ferro J.A."/>
            <person name="Reinach F.C."/>
            <person name="Farah C.S."/>
            <person name="Furlan L.R."/>
            <person name="Quaggio R.B."/>
            <person name="Monteiro-Vitorello C.B."/>
            <person name="Van Sluys M.A."/>
            <person name="Almeida N.F. Jr."/>
            <person name="Alves L.M.C."/>
            <person name="do Amaral A.M."/>
            <person name="Bertolini M.C."/>
            <person name="Camargo L.E.A."/>
            <person name="Camarotte G."/>
            <person name="Cannavan F."/>
            <person name="Cardozo J."/>
            <person name="Chambergo F."/>
            <person name="Ciapina L.P."/>
            <person name="Cicarelli R.M.B."/>
            <person name="Coutinho L.L."/>
            <person name="Cursino-Santos J.R."/>
            <person name="El-Dorry H."/>
            <person name="Faria J.B."/>
            <person name="Ferreira A.J.S."/>
            <person name="Ferreira R.C.C."/>
            <person name="Ferro M.I.T."/>
            <person name="Formighieri E.F."/>
            <person name="Franco M.C."/>
            <person name="Greggio C.C."/>
            <person name="Gruber A."/>
            <person name="Katsuyama A.M."/>
            <person name="Kishi L.T."/>
            <person name="Leite R.P."/>
            <person name="Lemos E.G.M."/>
            <person name="Lemos M.V.F."/>
            <person name="Locali E.C."/>
            <person name="Machado M.A."/>
            <person name="Madeira A.M.B.N."/>
            <person name="Martinez-Rossi N.M."/>
            <person name="Martins E.C."/>
            <person name="Meidanis J."/>
            <person name="Menck C.F.M."/>
            <person name="Miyaki C.Y."/>
            <person name="Moon D.H."/>
            <person name="Moreira L.M."/>
            <person name="Novo M.T.M."/>
            <person name="Okura V.K."/>
            <person name="Oliveira M.C."/>
            <person name="Oliveira V.R."/>
            <person name="Pereira H.A."/>
            <person name="Rossi A."/>
            <person name="Sena J.A.D."/>
            <person name="Silva C."/>
            <person name="de Souza R.F."/>
            <person name="Spinola L.A.F."/>
            <person name="Takita M.A."/>
            <person name="Tamura R.E."/>
            <person name="Teixeira E.C."/>
            <person name="Tezza R.I.D."/>
            <person name="Trindade dos Santos M."/>
            <person name="Truffi D."/>
            <person name="Tsai S.M."/>
            <person name="White F.F."/>
            <person name="Setubal J.C."/>
            <person name="Kitajima J.P."/>
        </authorList>
    </citation>
    <scope>NUCLEOTIDE SEQUENCE [LARGE SCALE GENOMIC DNA]</scope>
    <source>
        <strain>ATCC 33913 / DSM 3586 / NCPPB 528 / LMG 568 / P 25</strain>
    </source>
</reference>
<comment type="function">
    <text evidence="1">Catalyzes the ATP-dependent conversion of 7-carboxy-7-deazaguanine (CDG) to 7-cyano-7-deazaguanine (preQ(0)).</text>
</comment>
<comment type="catalytic activity">
    <reaction evidence="1">
        <text>7-carboxy-7-deazaguanine + NH4(+) + ATP = 7-cyano-7-deazaguanine + ADP + phosphate + H2O + H(+)</text>
        <dbReference type="Rhea" id="RHEA:27982"/>
        <dbReference type="ChEBI" id="CHEBI:15377"/>
        <dbReference type="ChEBI" id="CHEBI:15378"/>
        <dbReference type="ChEBI" id="CHEBI:28938"/>
        <dbReference type="ChEBI" id="CHEBI:30616"/>
        <dbReference type="ChEBI" id="CHEBI:43474"/>
        <dbReference type="ChEBI" id="CHEBI:45075"/>
        <dbReference type="ChEBI" id="CHEBI:61036"/>
        <dbReference type="ChEBI" id="CHEBI:456216"/>
        <dbReference type="EC" id="6.3.4.20"/>
    </reaction>
</comment>
<comment type="cofactor">
    <cofactor evidence="1">
        <name>Zn(2+)</name>
        <dbReference type="ChEBI" id="CHEBI:29105"/>
    </cofactor>
    <text evidence="1">Binds 1 zinc ion per subunit.</text>
</comment>
<comment type="pathway">
    <text evidence="1">Purine metabolism; 7-cyano-7-deazaguanine biosynthesis.</text>
</comment>
<comment type="similarity">
    <text evidence="1">Belongs to the QueC family.</text>
</comment>
<protein>
    <recommendedName>
        <fullName evidence="1">7-cyano-7-deazaguanine synthase</fullName>
        <ecNumber evidence="1">6.3.4.20</ecNumber>
    </recommendedName>
    <alternativeName>
        <fullName evidence="1">7-cyano-7-carbaguanine synthase</fullName>
    </alternativeName>
    <alternativeName>
        <fullName evidence="1">PreQ(0) synthase</fullName>
    </alternativeName>
    <alternativeName>
        <fullName evidence="1">Queuosine biosynthesis protein QueC</fullName>
    </alternativeName>
</protein>
<proteinExistence type="inferred from homology"/>
<feature type="chain" id="PRO_0000246962" description="7-cyano-7-deazaguanine synthase">
    <location>
        <begin position="1"/>
        <end position="224"/>
    </location>
</feature>
<feature type="binding site" evidence="1">
    <location>
        <begin position="8"/>
        <end position="18"/>
    </location>
    <ligand>
        <name>ATP</name>
        <dbReference type="ChEBI" id="CHEBI:30616"/>
    </ligand>
</feature>
<feature type="binding site" evidence="1">
    <location>
        <position position="186"/>
    </location>
    <ligand>
        <name>Zn(2+)</name>
        <dbReference type="ChEBI" id="CHEBI:29105"/>
    </ligand>
</feature>
<feature type="binding site" evidence="1">
    <location>
        <position position="196"/>
    </location>
    <ligand>
        <name>Zn(2+)</name>
        <dbReference type="ChEBI" id="CHEBI:29105"/>
    </ligand>
</feature>
<feature type="binding site" evidence="1">
    <location>
        <position position="199"/>
    </location>
    <ligand>
        <name>Zn(2+)</name>
        <dbReference type="ChEBI" id="CHEBI:29105"/>
    </ligand>
</feature>
<feature type="binding site" evidence="1">
    <location>
        <position position="202"/>
    </location>
    <ligand>
        <name>Zn(2+)</name>
        <dbReference type="ChEBI" id="CHEBI:29105"/>
    </ligand>
</feature>
<gene>
    <name evidence="1" type="primary">queC</name>
    <name type="ordered locus">XCC3014</name>
</gene>
<dbReference type="EC" id="6.3.4.20" evidence="1"/>
<dbReference type="EMBL" id="AE008922">
    <property type="protein sequence ID" value="AAM42285.1"/>
    <property type="molecule type" value="Genomic_DNA"/>
</dbReference>
<dbReference type="RefSeq" id="NP_638361.1">
    <property type="nucleotide sequence ID" value="NC_003902.1"/>
</dbReference>
<dbReference type="RefSeq" id="WP_011038130.1">
    <property type="nucleotide sequence ID" value="NC_003902.1"/>
</dbReference>
<dbReference type="SMR" id="Q8P6F6"/>
<dbReference type="STRING" id="190485.XCC3014"/>
<dbReference type="EnsemblBacteria" id="AAM42285">
    <property type="protein sequence ID" value="AAM42285"/>
    <property type="gene ID" value="XCC3014"/>
</dbReference>
<dbReference type="KEGG" id="xcc:XCC3014"/>
<dbReference type="PATRIC" id="fig|190485.4.peg.3215"/>
<dbReference type="eggNOG" id="COG0603">
    <property type="taxonomic scope" value="Bacteria"/>
</dbReference>
<dbReference type="HOGENOM" id="CLU_081854_1_1_6"/>
<dbReference type="OrthoDB" id="9789567at2"/>
<dbReference type="UniPathway" id="UPA00391"/>
<dbReference type="Proteomes" id="UP000001010">
    <property type="component" value="Chromosome"/>
</dbReference>
<dbReference type="GO" id="GO:0005524">
    <property type="term" value="F:ATP binding"/>
    <property type="evidence" value="ECO:0007669"/>
    <property type="project" value="UniProtKB-UniRule"/>
</dbReference>
<dbReference type="GO" id="GO:0016879">
    <property type="term" value="F:ligase activity, forming carbon-nitrogen bonds"/>
    <property type="evidence" value="ECO:0007669"/>
    <property type="project" value="UniProtKB-UniRule"/>
</dbReference>
<dbReference type="GO" id="GO:0008270">
    <property type="term" value="F:zinc ion binding"/>
    <property type="evidence" value="ECO:0007669"/>
    <property type="project" value="UniProtKB-UniRule"/>
</dbReference>
<dbReference type="GO" id="GO:0008616">
    <property type="term" value="P:queuosine biosynthetic process"/>
    <property type="evidence" value="ECO:0007669"/>
    <property type="project" value="UniProtKB-UniRule"/>
</dbReference>
<dbReference type="CDD" id="cd01995">
    <property type="entry name" value="QueC-like"/>
    <property type="match status" value="1"/>
</dbReference>
<dbReference type="FunFam" id="3.40.50.620:FF:000131">
    <property type="entry name" value="7-cyano-7-deazaguanine synthase"/>
    <property type="match status" value="1"/>
</dbReference>
<dbReference type="Gene3D" id="3.40.50.620">
    <property type="entry name" value="HUPs"/>
    <property type="match status" value="1"/>
</dbReference>
<dbReference type="HAMAP" id="MF_01633">
    <property type="entry name" value="QueC"/>
    <property type="match status" value="1"/>
</dbReference>
<dbReference type="InterPro" id="IPR018317">
    <property type="entry name" value="QueC"/>
</dbReference>
<dbReference type="InterPro" id="IPR014729">
    <property type="entry name" value="Rossmann-like_a/b/a_fold"/>
</dbReference>
<dbReference type="NCBIfam" id="TIGR00364">
    <property type="entry name" value="7-cyano-7-deazaguanine synthase QueC"/>
    <property type="match status" value="1"/>
</dbReference>
<dbReference type="PANTHER" id="PTHR42914">
    <property type="entry name" value="7-CYANO-7-DEAZAGUANINE SYNTHASE"/>
    <property type="match status" value="1"/>
</dbReference>
<dbReference type="PANTHER" id="PTHR42914:SF1">
    <property type="entry name" value="7-CYANO-7-DEAZAGUANINE SYNTHASE"/>
    <property type="match status" value="1"/>
</dbReference>
<dbReference type="Pfam" id="PF06508">
    <property type="entry name" value="QueC"/>
    <property type="match status" value="1"/>
</dbReference>
<dbReference type="PIRSF" id="PIRSF006293">
    <property type="entry name" value="ExsB"/>
    <property type="match status" value="1"/>
</dbReference>
<dbReference type="SUPFAM" id="SSF52402">
    <property type="entry name" value="Adenine nucleotide alpha hydrolases-like"/>
    <property type="match status" value="1"/>
</dbReference>
<sequence>MKKAVVLLSGGMDSAAVIALAQEQGFAVHALSVRYGQRHTSELDAAARVAAAQGVVAHKVVDVDLRSIGGSALTADIDVPEAGGAGIPVTYVPARNTIMLSLALGWAEVVGANDLFCGVNAVDYSGYPDCRPEFVRAFEVLANLATKAGVEGAGLRVHAPLQFLSKADIVRAGVRLGVDFGLTVSCYNADADGRACGHCDACRLRAAGFADAGVPDPTHYAISS</sequence>
<name>QUEC_XANCP</name>
<keyword id="KW-0067">ATP-binding</keyword>
<keyword id="KW-0436">Ligase</keyword>
<keyword id="KW-0479">Metal-binding</keyword>
<keyword id="KW-0547">Nucleotide-binding</keyword>
<keyword id="KW-0671">Queuosine biosynthesis</keyword>
<keyword id="KW-1185">Reference proteome</keyword>
<keyword id="KW-0862">Zinc</keyword>
<evidence type="ECO:0000255" key="1">
    <source>
        <dbReference type="HAMAP-Rule" id="MF_01633"/>
    </source>
</evidence>